<evidence type="ECO:0000255" key="1"/>
<evidence type="ECO:0000256" key="2">
    <source>
        <dbReference type="SAM" id="MobiDB-lite"/>
    </source>
</evidence>
<evidence type="ECO:0000269" key="3">
    <source>
    </source>
</evidence>
<evidence type="ECO:0000269" key="4">
    <source>
    </source>
</evidence>
<evidence type="ECO:0000269" key="5">
    <source>
    </source>
</evidence>
<evidence type="ECO:0000269" key="6">
    <source>
    </source>
</evidence>
<evidence type="ECO:0000269" key="7">
    <source>
    </source>
</evidence>
<evidence type="ECO:0000269" key="8">
    <source>
    </source>
</evidence>
<evidence type="ECO:0000269" key="9">
    <source>
    </source>
</evidence>
<evidence type="ECO:0000269" key="10">
    <source>
    </source>
</evidence>
<evidence type="ECO:0000269" key="11">
    <source>
    </source>
</evidence>
<evidence type="ECO:0000303" key="12">
    <source>
    </source>
</evidence>
<evidence type="ECO:0000303" key="13">
    <source>
    </source>
</evidence>
<evidence type="ECO:0000303" key="14">
    <source>
    </source>
</evidence>
<evidence type="ECO:0000305" key="15"/>
<evidence type="ECO:0000312" key="16">
    <source>
        <dbReference type="HGNC" id="HGNC:14135"/>
    </source>
</evidence>
<reference key="1">
    <citation type="journal article" date="1998" name="Biochem. J.">
        <title>Human and mouse Gpi1p homologues restore glycosylphosphatidylinositol membrane anchor biosynthesis in yeast mutants.</title>
        <authorList>
            <person name="Tiede A."/>
            <person name="Schubert J."/>
            <person name="Nischan C."/>
            <person name="Jensen I."/>
            <person name="Westfall B."/>
            <person name="Taron C.H."/>
            <person name="Orlean P."/>
            <person name="Schmidt R.E."/>
        </authorList>
    </citation>
    <scope>NUCLEOTIDE SEQUENCE [MRNA] (ISOFORM 2)</scope>
</reference>
<reference key="2">
    <citation type="journal article" date="1998" name="EMBO J.">
        <title>The first step of glycosylphosphatidylinositol biosynthesis is mediated by a complex of PIG-A, PIG-H, PIG-C and GPI1.</title>
        <authorList>
            <person name="Watanabe R."/>
            <person name="Inoue N."/>
            <person name="Westfall B."/>
            <person name="Taron C.H."/>
            <person name="Orlean P."/>
            <person name="Takeda J."/>
            <person name="Kinoshita T."/>
        </authorList>
    </citation>
    <scope>NUCLEOTIDE SEQUENCE [MRNA] (ISOFORM 2)</scope>
    <scope>INTERACTION WITH PIGA; PIGH AND PIGC</scope>
    <scope>COMPONENT OF GPI-GNT COMPLEX</scope>
    <scope>FUNCTION</scope>
</reference>
<reference key="3">
    <citation type="journal article" date="2001" name="Hum. Mol. Genet.">
        <title>Sequence, structure and pathology of the fully annotated terminal 2 Mb of the short arm of human chromosome 16.</title>
        <authorList>
            <person name="Daniels R.J."/>
            <person name="Peden J.F."/>
            <person name="Lloyd C."/>
            <person name="Horsley S.W."/>
            <person name="Clark K."/>
            <person name="Tufarelli C."/>
            <person name="Kearney L."/>
            <person name="Buckle V.J."/>
            <person name="Doggett N.A."/>
            <person name="Flint J."/>
            <person name="Higgs D.R."/>
        </authorList>
    </citation>
    <scope>NUCLEOTIDE SEQUENCE [LARGE SCALE GENOMIC DNA]</scope>
    <scope>VARIANT ALA-14</scope>
</reference>
<reference key="4">
    <citation type="submission" date="2005-09" db="EMBL/GenBank/DDBJ databases">
        <authorList>
            <person name="Mural R.J."/>
            <person name="Istrail S."/>
            <person name="Sutton G.G."/>
            <person name="Florea L."/>
            <person name="Halpern A.L."/>
            <person name="Mobarry C.M."/>
            <person name="Lippert R."/>
            <person name="Walenz B."/>
            <person name="Shatkay H."/>
            <person name="Dew I."/>
            <person name="Miller J.R."/>
            <person name="Flanigan M.J."/>
            <person name="Edwards N.J."/>
            <person name="Bolanos R."/>
            <person name="Fasulo D."/>
            <person name="Halldorsson B.V."/>
            <person name="Hannenhalli S."/>
            <person name="Turner R."/>
            <person name="Yooseph S."/>
            <person name="Lu F."/>
            <person name="Nusskern D.R."/>
            <person name="Shue B.C."/>
            <person name="Zheng X.H."/>
            <person name="Zhong F."/>
            <person name="Delcher A.L."/>
            <person name="Huson D.H."/>
            <person name="Kravitz S.A."/>
            <person name="Mouchard L."/>
            <person name="Reinert K."/>
            <person name="Remington K.A."/>
            <person name="Clark A.G."/>
            <person name="Waterman M.S."/>
            <person name="Eichler E.E."/>
            <person name="Adams M.D."/>
            <person name="Hunkapiller M.W."/>
            <person name="Myers E.W."/>
            <person name="Venter J.C."/>
        </authorList>
    </citation>
    <scope>NUCLEOTIDE SEQUENCE [LARGE SCALE GENOMIC DNA]</scope>
</reference>
<reference key="5">
    <citation type="journal article" date="2004" name="Nature">
        <title>The sequence and analysis of duplication-rich human chromosome 16.</title>
        <authorList>
            <person name="Martin J."/>
            <person name="Han C."/>
            <person name="Gordon L.A."/>
            <person name="Terry A."/>
            <person name="Prabhakar S."/>
            <person name="She X."/>
            <person name="Xie G."/>
            <person name="Hellsten U."/>
            <person name="Chan Y.M."/>
            <person name="Altherr M."/>
            <person name="Couronne O."/>
            <person name="Aerts A."/>
            <person name="Bajorek E."/>
            <person name="Black S."/>
            <person name="Blumer H."/>
            <person name="Branscomb E."/>
            <person name="Brown N.C."/>
            <person name="Bruno W.J."/>
            <person name="Buckingham J.M."/>
            <person name="Callen D.F."/>
            <person name="Campbell C.S."/>
            <person name="Campbell M.L."/>
            <person name="Campbell E.W."/>
            <person name="Caoile C."/>
            <person name="Challacombe J.F."/>
            <person name="Chasteen L.A."/>
            <person name="Chertkov O."/>
            <person name="Chi H.C."/>
            <person name="Christensen M."/>
            <person name="Clark L.M."/>
            <person name="Cohn J.D."/>
            <person name="Denys M."/>
            <person name="Detter J.C."/>
            <person name="Dickson M."/>
            <person name="Dimitrijevic-Bussod M."/>
            <person name="Escobar J."/>
            <person name="Fawcett J.J."/>
            <person name="Flowers D."/>
            <person name="Fotopulos D."/>
            <person name="Glavina T."/>
            <person name="Gomez M."/>
            <person name="Gonzales E."/>
            <person name="Goodstein D."/>
            <person name="Goodwin L.A."/>
            <person name="Grady D.L."/>
            <person name="Grigoriev I."/>
            <person name="Groza M."/>
            <person name="Hammon N."/>
            <person name="Hawkins T."/>
            <person name="Haydu L."/>
            <person name="Hildebrand C.E."/>
            <person name="Huang W."/>
            <person name="Israni S."/>
            <person name="Jett J."/>
            <person name="Jewett P.B."/>
            <person name="Kadner K."/>
            <person name="Kimball H."/>
            <person name="Kobayashi A."/>
            <person name="Krawczyk M.-C."/>
            <person name="Leyba T."/>
            <person name="Longmire J.L."/>
            <person name="Lopez F."/>
            <person name="Lou Y."/>
            <person name="Lowry S."/>
            <person name="Ludeman T."/>
            <person name="Manohar C.F."/>
            <person name="Mark G.A."/>
            <person name="McMurray K.L."/>
            <person name="Meincke L.J."/>
            <person name="Morgan J."/>
            <person name="Moyzis R.K."/>
            <person name="Mundt M.O."/>
            <person name="Munk A.C."/>
            <person name="Nandkeshwar R.D."/>
            <person name="Pitluck S."/>
            <person name="Pollard M."/>
            <person name="Predki P."/>
            <person name="Parson-Quintana B."/>
            <person name="Ramirez L."/>
            <person name="Rash S."/>
            <person name="Retterer J."/>
            <person name="Ricke D.O."/>
            <person name="Robinson D.L."/>
            <person name="Rodriguez A."/>
            <person name="Salamov A."/>
            <person name="Saunders E.H."/>
            <person name="Scott D."/>
            <person name="Shough T."/>
            <person name="Stallings R.L."/>
            <person name="Stalvey M."/>
            <person name="Sutherland R.D."/>
            <person name="Tapia R."/>
            <person name="Tesmer J.G."/>
            <person name="Thayer N."/>
            <person name="Thompson L.S."/>
            <person name="Tice H."/>
            <person name="Torney D.C."/>
            <person name="Tran-Gyamfi M."/>
            <person name="Tsai M."/>
            <person name="Ulanovsky L.E."/>
            <person name="Ustaszewska A."/>
            <person name="Vo N."/>
            <person name="White P.S."/>
            <person name="Williams A.L."/>
            <person name="Wills P.L."/>
            <person name="Wu J.-R."/>
            <person name="Wu K."/>
            <person name="Yang J."/>
            <person name="DeJong P."/>
            <person name="Bruce D."/>
            <person name="Doggett N.A."/>
            <person name="Deaven L."/>
            <person name="Schmutz J."/>
            <person name="Grimwood J."/>
            <person name="Richardson P."/>
            <person name="Rokhsar D.S."/>
            <person name="Eichler E.E."/>
            <person name="Gilna P."/>
            <person name="Lucas S.M."/>
            <person name="Myers R.M."/>
            <person name="Rubin E.M."/>
            <person name="Pennacchio L.A."/>
        </authorList>
    </citation>
    <scope>NUCLEOTIDE SEQUENCE [LARGE SCALE GENOMIC DNA]</scope>
</reference>
<reference key="6">
    <citation type="journal article" date="2004" name="Genome Res.">
        <title>The status, quality, and expansion of the NIH full-length cDNA project: the Mammalian Gene Collection (MGC).</title>
        <authorList>
            <consortium name="The MGC Project Team"/>
        </authorList>
    </citation>
    <scope>NUCLEOTIDE SEQUENCE [LARGE SCALE MRNA] (ISOFORMS 1 AND 3)</scope>
    <scope>VARIANT ALA-14</scope>
    <source>
        <tissue>Melanoma</tissue>
        <tissue>Retinoblastoma</tissue>
    </source>
</reference>
<reference key="7">
    <citation type="journal article" date="2000" name="EMBO J.">
        <title>Initial enzyme for glycosylphosphatidylinositol biosynthesis requires PIG-P and is regulated by DPM2.</title>
        <authorList>
            <person name="Watanabe R."/>
            <person name="Murakami Y."/>
            <person name="Marmor M.D."/>
            <person name="Inoue N."/>
            <person name="Maeda Y."/>
            <person name="Hino J."/>
            <person name="Kangawa K."/>
            <person name="Julius M."/>
            <person name="Kinoshita T."/>
        </authorList>
    </citation>
    <scope>PROTEIN SEQUENCE OF 2-6</scope>
</reference>
<reference key="8">
    <citation type="journal article" date="2005" name="Mol. Biol. Cell">
        <title>The initial enzyme for glycosylphosphatidylinositol biosynthesis requires PIG-Y, a seventh component.</title>
        <authorList>
            <person name="Murakami Y."/>
            <person name="Siripanyaphinyo U."/>
            <person name="Hong Y."/>
            <person name="Tashima Y."/>
            <person name="Maeda Y."/>
            <person name="Kinoshita T."/>
        </authorList>
    </citation>
    <scope>COMPONENT OF GPI-GNT COMPLEX</scope>
    <scope>FUNCTION</scope>
</reference>
<reference key="9">
    <citation type="journal article" date="2014" name="Hum. Mol. Genet.">
        <title>Clinical whole-genome sequencing in severe early-onset epilepsy reveals new genes and improves molecular diagnosis.</title>
        <authorList>
            <consortium name="WGS500 Consortium"/>
            <person name="Martin H.C."/>
            <person name="Kim G.E."/>
            <person name="Pagnamenta A.T."/>
            <person name="Murakami Y."/>
            <person name="Carvill G.L."/>
            <person name="Meyer E."/>
            <person name="Copley R.R."/>
            <person name="Rimmer A."/>
            <person name="Barcia G."/>
            <person name="Fleming M.R."/>
            <person name="Kronengold J."/>
            <person name="Brown M.R."/>
            <person name="Hudspith K.A."/>
            <person name="Broxholme J."/>
            <person name="Kanapin A."/>
            <person name="Cazier J.B."/>
            <person name="Kinoshita T."/>
            <person name="Nabbout R."/>
            <person name="Bentley D."/>
            <person name="McVean G."/>
            <person name="Heavin S."/>
            <person name="Zaiwalla Z."/>
            <person name="McShane T."/>
            <person name="Mefford H.C."/>
            <person name="Shears D."/>
            <person name="Stewart H."/>
            <person name="Kurian M.A."/>
            <person name="Scheffer I.E."/>
            <person name="Blair E."/>
            <person name="Donnelly P."/>
            <person name="Kaczmarek L.K."/>
            <person name="Taylor J.C."/>
        </authorList>
    </citation>
    <scope>INVOLVEMENT IN MCAHS4</scope>
</reference>
<reference key="10">
    <citation type="journal article" date="2015" name="Cell Rep.">
        <title>Accelerating novel candidate gene discovery in neurogenetic disorders via whole-exome sequencing of prescreened multiplex consanguineous families.</title>
        <authorList>
            <person name="Alazami A.M."/>
            <person name="Patel N."/>
            <person name="Shamseldin H.E."/>
            <person name="Anazi S."/>
            <person name="Al-Dosari M.S."/>
            <person name="Alzahrani F."/>
            <person name="Hijazi H."/>
            <person name="Alshammari M."/>
            <person name="Aldahmesh M.A."/>
            <person name="Salih M.A."/>
            <person name="Faqeih E."/>
            <person name="Alhashem A."/>
            <person name="Bashiri F.A."/>
            <person name="Al-Owain M."/>
            <person name="Kentab A.Y."/>
            <person name="Sogaty S."/>
            <person name="Al Tala S."/>
            <person name="Temsah M.H."/>
            <person name="Tulbah M."/>
            <person name="Aljelaify R.F."/>
            <person name="Alshahwan S.A."/>
            <person name="Seidahmed M.Z."/>
            <person name="Alhadid A.A."/>
            <person name="Aldhalaan H."/>
            <person name="Alqallaf F."/>
            <person name="Kurdi W."/>
            <person name="Alfadhel M."/>
            <person name="Babay Z."/>
            <person name="Alsogheer M."/>
            <person name="Kaya N."/>
            <person name="Al-Hassnan Z.N."/>
            <person name="Abdel-Salam G.M."/>
            <person name="Al-Sannaa N."/>
            <person name="Al Mutairi F."/>
            <person name="El Khashab H.Y."/>
            <person name="Bohlega S."/>
            <person name="Jia X."/>
            <person name="Nguyen H.C."/>
            <person name="Hammami R."/>
            <person name="Adly N."/>
            <person name="Mohamed J.Y."/>
            <person name="Abdulwahab F."/>
            <person name="Ibrahim N."/>
            <person name="Naim E.A."/>
            <person name="Al-Younes B."/>
            <person name="Meyer B.F."/>
            <person name="Hashem M."/>
            <person name="Shaheen R."/>
            <person name="Xiong Y."/>
            <person name="Abouelhoda M."/>
            <person name="Aldeeri A.A."/>
            <person name="Monies D.M."/>
            <person name="Alkuraya F.S."/>
        </authorList>
    </citation>
    <scope>INVOLVEMENT IN MCAHS4</scope>
    <scope>VARIANT MCAHS4 207-ARG--LEU-760 DEL</scope>
</reference>
<reference key="11">
    <citation type="journal article" date="2017" name="Genet. Med.">
        <title>Candidate-gene criteria for clinical reporting: diagnostic exome sequencing identifies altered candidate genes among 8% of patients with undiagnosed diseases.</title>
        <authorList>
            <person name="Farwell Hagman K.D."/>
            <person name="Shinde D.N."/>
            <person name="Mroske C."/>
            <person name="Smith E."/>
            <person name="Radtke K."/>
            <person name="Shahmirzadi L."/>
            <person name="El-Khechen D."/>
            <person name="Powis Z."/>
            <person name="Chao E.C."/>
            <person name="Alcaraz W.A."/>
            <person name="Helbig K.L."/>
            <person name="Sajan S.A."/>
            <person name="Rossi M."/>
            <person name="Lu H.M."/>
            <person name="Huether R."/>
            <person name="Li S."/>
            <person name="Wu S."/>
            <person name="Nunes M.E."/>
            <person name="Tang S."/>
        </authorList>
    </citation>
    <scope>VARIANT MCAHS4 TYR-400 DEL</scope>
</reference>
<reference key="12">
    <citation type="journal article" date="2018" name="Genet. Med.">
        <authorList>
            <person name="Farwell Hagman K.D."/>
            <person name="Shinde D.N."/>
            <person name="Mroske C."/>
            <person name="Smith E."/>
            <person name="Radtke K."/>
            <person name="Shahmirzadi L."/>
            <person name="El-Khechen D."/>
            <person name="Powis Z."/>
            <person name="Chao E.C."/>
            <person name="Alcaraz W.A."/>
            <person name="Helbig K.L."/>
            <person name="Sajan S.A."/>
            <person name="Rossi M."/>
            <person name="Lu H.M."/>
            <person name="Huether R."/>
            <person name="Li S."/>
            <person name="Wu S."/>
            <person name="Nunes M.E."/>
            <person name="Tang S."/>
        </authorList>
    </citation>
    <scope>ERRATUM OF PUBMED:27513193</scope>
</reference>
<reference key="13">
    <citation type="journal article" date="2019" name="Am. J. Med. Genet. A">
        <title>PIGQ glycosylphosphatidylinositol-anchored protein deficiency: Characterizing the phenotype.</title>
        <authorList>
            <person name="Starr L.J."/>
            <person name="Spranger J.W."/>
            <person name="Rao V.K."/>
            <person name="Lutz R."/>
            <person name="Yetman A.T."/>
        </authorList>
    </citation>
    <scope>VARIANT MCAHS4 TYR-400 DEL</scope>
</reference>
<dbReference type="EMBL" id="AF030177">
    <property type="protein sequence ID" value="AAC32661.1"/>
    <property type="molecule type" value="mRNA"/>
</dbReference>
<dbReference type="EMBL" id="AB003723">
    <property type="protein sequence ID" value="BAA24948.1"/>
    <property type="molecule type" value="mRNA"/>
</dbReference>
<dbReference type="EMBL" id="AE006464">
    <property type="protein sequence ID" value="AAK61235.1"/>
    <property type="molecule type" value="Genomic_DNA"/>
</dbReference>
<dbReference type="EMBL" id="Z98883">
    <property type="status" value="NOT_ANNOTATED_CDS"/>
    <property type="molecule type" value="Genomic_DNA"/>
</dbReference>
<dbReference type="EMBL" id="CH471112">
    <property type="protein sequence ID" value="EAW85796.1"/>
    <property type="molecule type" value="Genomic_DNA"/>
</dbReference>
<dbReference type="EMBL" id="CH471112">
    <property type="protein sequence ID" value="EAW85797.1"/>
    <property type="molecule type" value="Genomic_DNA"/>
</dbReference>
<dbReference type="EMBL" id="CH471112">
    <property type="protein sequence ID" value="EAW85799.1"/>
    <property type="molecule type" value="Genomic_DNA"/>
</dbReference>
<dbReference type="EMBL" id="BC006377">
    <property type="protein sequence ID" value="AAH06377.1"/>
    <property type="molecule type" value="mRNA"/>
</dbReference>
<dbReference type="EMBL" id="BC010094">
    <property type="status" value="NOT_ANNOTATED_CDS"/>
    <property type="molecule type" value="mRNA"/>
</dbReference>
<dbReference type="CCDS" id="CCDS10411.1">
    <molecule id="Q9BRB3-1"/>
</dbReference>
<dbReference type="CCDS" id="CCDS10412.1">
    <molecule id="Q9BRB3-2"/>
</dbReference>
<dbReference type="RefSeq" id="NP_004195.2">
    <molecule id="Q9BRB3-2"/>
    <property type="nucleotide sequence ID" value="NM_004204.3"/>
</dbReference>
<dbReference type="RefSeq" id="NP_683721.1">
    <molecule id="Q9BRB3-1"/>
    <property type="nucleotide sequence ID" value="NM_148920.4"/>
</dbReference>
<dbReference type="BioGRID" id="114545">
    <property type="interactions" value="36"/>
</dbReference>
<dbReference type="ComplexPortal" id="CPX-6502">
    <property type="entry name" value="Glycosylphosphatidylinositol-N-acetylglucosaminyltransferase complex"/>
</dbReference>
<dbReference type="CORUM" id="Q9BRB3"/>
<dbReference type="FunCoup" id="Q9BRB3">
    <property type="interactions" value="664"/>
</dbReference>
<dbReference type="IntAct" id="Q9BRB3">
    <property type="interactions" value="36"/>
</dbReference>
<dbReference type="MINT" id="Q9BRB3"/>
<dbReference type="STRING" id="9606.ENSP00000026218"/>
<dbReference type="iPTMnet" id="Q9BRB3"/>
<dbReference type="PhosphoSitePlus" id="Q9BRB3"/>
<dbReference type="SwissPalm" id="Q9BRB3"/>
<dbReference type="BioMuta" id="PIGQ"/>
<dbReference type="DMDM" id="30173119"/>
<dbReference type="jPOST" id="Q9BRB3"/>
<dbReference type="MassIVE" id="Q9BRB3"/>
<dbReference type="PaxDb" id="9606-ENSP00000026218"/>
<dbReference type="PeptideAtlas" id="Q9BRB3"/>
<dbReference type="ProteomicsDB" id="78753">
    <molecule id="Q9BRB3-1"/>
</dbReference>
<dbReference type="ProteomicsDB" id="78754">
    <molecule id="Q9BRB3-2"/>
</dbReference>
<dbReference type="ProteomicsDB" id="78755">
    <molecule id="Q9BRB3-3"/>
</dbReference>
<dbReference type="Antibodypedia" id="22728">
    <property type="antibodies" value="84 antibodies from 22 providers"/>
</dbReference>
<dbReference type="DNASU" id="9091"/>
<dbReference type="Ensembl" id="ENST00000026218.9">
    <molecule id="Q9BRB3-1"/>
    <property type="protein sequence ID" value="ENSP00000026218.5"/>
    <property type="gene ID" value="ENSG00000007541.17"/>
</dbReference>
<dbReference type="Ensembl" id="ENST00000321878.10">
    <molecule id="Q9BRB3-2"/>
    <property type="protein sequence ID" value="ENSP00000326674.6"/>
    <property type="gene ID" value="ENSG00000007541.17"/>
</dbReference>
<dbReference type="Ensembl" id="ENST00000409527.6">
    <molecule id="Q9BRB3-2"/>
    <property type="protein sequence ID" value="ENSP00000386760.2"/>
    <property type="gene ID" value="ENSG00000007541.17"/>
</dbReference>
<dbReference type="Ensembl" id="ENST00000470411.2">
    <molecule id="Q9BRB3-3"/>
    <property type="protein sequence ID" value="ENSP00000439650.1"/>
    <property type="gene ID" value="ENSG00000007541.17"/>
</dbReference>
<dbReference type="GeneID" id="9091"/>
<dbReference type="KEGG" id="hsa:9091"/>
<dbReference type="MANE-Select" id="ENST00000321878.10">
    <molecule id="Q9BRB3-2"/>
    <property type="protein sequence ID" value="ENSP00000326674.6"/>
    <property type="RefSeq nucleotide sequence ID" value="NM_004204.5"/>
    <property type="RefSeq protein sequence ID" value="NP_004195.2"/>
</dbReference>
<dbReference type="UCSC" id="uc002chm.4">
    <molecule id="Q9BRB3-1"/>
    <property type="organism name" value="human"/>
</dbReference>
<dbReference type="AGR" id="HGNC:14135"/>
<dbReference type="CTD" id="9091"/>
<dbReference type="DisGeNET" id="9091"/>
<dbReference type="GeneCards" id="PIGQ"/>
<dbReference type="HGNC" id="HGNC:14135">
    <property type="gene designation" value="PIGQ"/>
</dbReference>
<dbReference type="HPA" id="ENSG00000007541">
    <property type="expression patterns" value="Low tissue specificity"/>
</dbReference>
<dbReference type="MalaCards" id="PIGQ"/>
<dbReference type="MIM" id="605754">
    <property type="type" value="gene"/>
</dbReference>
<dbReference type="MIM" id="618548">
    <property type="type" value="phenotype"/>
</dbReference>
<dbReference type="neXtProt" id="NX_Q9BRB3"/>
<dbReference type="OpenTargets" id="ENSG00000007541"/>
<dbReference type="Orphanet" id="1934">
    <property type="disease" value="Early infantile developmental and epileptic encephalopathy"/>
</dbReference>
<dbReference type="PharmGKB" id="PA33299"/>
<dbReference type="VEuPathDB" id="HostDB:ENSG00000007541"/>
<dbReference type="eggNOG" id="KOG1183">
    <property type="taxonomic scope" value="Eukaryota"/>
</dbReference>
<dbReference type="GeneTree" id="ENSGT00390000004994"/>
<dbReference type="HOGENOM" id="CLU_021157_2_0_1"/>
<dbReference type="InParanoid" id="Q9BRB3"/>
<dbReference type="OMA" id="HKGDKQN"/>
<dbReference type="OrthoDB" id="70250at2759"/>
<dbReference type="PAN-GO" id="Q9BRB3">
    <property type="GO annotations" value="2 GO annotations based on evolutionary models"/>
</dbReference>
<dbReference type="PhylomeDB" id="Q9BRB3"/>
<dbReference type="TreeFam" id="TF321258"/>
<dbReference type="BRENDA" id="2.4.1.198">
    <property type="organism ID" value="2681"/>
</dbReference>
<dbReference type="PathwayCommons" id="Q9BRB3"/>
<dbReference type="Reactome" id="R-HSA-162710">
    <molecule id="Q9BRB3-2"/>
    <property type="pathway name" value="Synthesis of glycosylphosphatidylinositol (GPI)"/>
</dbReference>
<dbReference type="SignaLink" id="Q9BRB3"/>
<dbReference type="UniPathway" id="UPA00196"/>
<dbReference type="BioGRID-ORCS" id="9091">
    <property type="hits" value="27 hits in 1162 CRISPR screens"/>
</dbReference>
<dbReference type="ChiTaRS" id="PIGQ">
    <property type="organism name" value="human"/>
</dbReference>
<dbReference type="GeneWiki" id="PIGQ"/>
<dbReference type="GenomeRNAi" id="9091"/>
<dbReference type="Pharos" id="Q9BRB3">
    <property type="development level" value="Tbio"/>
</dbReference>
<dbReference type="PRO" id="PR:Q9BRB3"/>
<dbReference type="Proteomes" id="UP000005640">
    <property type="component" value="Chromosome 16"/>
</dbReference>
<dbReference type="RNAct" id="Q9BRB3">
    <property type="molecule type" value="protein"/>
</dbReference>
<dbReference type="Bgee" id="ENSG00000007541">
    <property type="expression patterns" value="Expressed in right lobe of thyroid gland and 110 other cell types or tissues"/>
</dbReference>
<dbReference type="ExpressionAtlas" id="Q9BRB3">
    <property type="expression patterns" value="baseline and differential"/>
</dbReference>
<dbReference type="GO" id="GO:0005783">
    <property type="term" value="C:endoplasmic reticulum"/>
    <property type="evidence" value="ECO:0000318"/>
    <property type="project" value="GO_Central"/>
</dbReference>
<dbReference type="GO" id="GO:0005789">
    <property type="term" value="C:endoplasmic reticulum membrane"/>
    <property type="evidence" value="ECO:0000314"/>
    <property type="project" value="ComplexPortal"/>
</dbReference>
<dbReference type="GO" id="GO:0000506">
    <property type="term" value="C:glycosylphosphatidylinositol-N-acetylglucosaminyltransferase (GPI-GnT) complex"/>
    <property type="evidence" value="ECO:0000314"/>
    <property type="project" value="UniProtKB"/>
</dbReference>
<dbReference type="GO" id="GO:0017176">
    <property type="term" value="F:phosphatidylinositol N-acetylglucosaminyltransferase activity"/>
    <property type="evidence" value="ECO:0007669"/>
    <property type="project" value="Ensembl"/>
</dbReference>
<dbReference type="GO" id="GO:0005975">
    <property type="term" value="P:carbohydrate metabolic process"/>
    <property type="evidence" value="ECO:0000304"/>
    <property type="project" value="ProtInc"/>
</dbReference>
<dbReference type="GO" id="GO:0006506">
    <property type="term" value="P:GPI anchor biosynthetic process"/>
    <property type="evidence" value="ECO:0000314"/>
    <property type="project" value="UniProtKB"/>
</dbReference>
<dbReference type="InterPro" id="IPR007720">
    <property type="entry name" value="PigQ/GPI1"/>
</dbReference>
<dbReference type="PANTHER" id="PTHR21329:SF3">
    <property type="entry name" value="PHOSPHATIDYLINOSITOL N-ACETYLGLUCOSAMINYLTRANSFERASE SUBUNIT Q"/>
    <property type="match status" value="1"/>
</dbReference>
<dbReference type="PANTHER" id="PTHR21329">
    <property type="entry name" value="PHOSPHATIDYLINOSITOL N-ACETYLGLUCOSAMINYLTRANSFERASE SUBUNIT Q-RELATED"/>
    <property type="match status" value="1"/>
</dbReference>
<dbReference type="Pfam" id="PF05024">
    <property type="entry name" value="Gpi1"/>
    <property type="match status" value="1"/>
</dbReference>
<comment type="function">
    <text evidence="6 11">Part of the glycosylphosphatidylinositol-N-acetylglucosaminyltransferase (GPI-GnT) complex that catalyzes the transfer of N-acetylglucosamine from UDP-N-acetylglucosamine to phosphatidylinositol and participates in the first step of GPI biosynthesis.</text>
</comment>
<comment type="pathway">
    <text evidence="6 11">Glycolipid biosynthesis; glycosylphosphatidylinositol-anchor biosynthesis.</text>
</comment>
<comment type="subunit">
    <text evidence="6 11">Component of the glycosylphosphatidylinositol-N-acetylglucosaminyltransferase (GPI-GnT) complex composed at least by PIGA, PIGC, PIGH, PIGP, PIGQ, PIGY and DPM2 (PubMed:16162815, PubMed:9463366). Interacts with PIGA, PIGH and PIGC (PubMed:9463366).</text>
</comment>
<comment type="interaction">
    <interactant intactId="EBI-2339260">
        <id>Q9BRB3</id>
    </interactant>
    <interactant intactId="EBI-9097061">
        <id>O94777</id>
        <label>DPM2</label>
    </interactant>
    <organismsDiffer>false</organismsDiffer>
    <experiments>2</experiments>
</comment>
<comment type="interaction">
    <interactant intactId="EBI-2339260">
        <id>Q9BRB3</id>
    </interactant>
    <interactant intactId="EBI-26643054">
        <id>P37287</id>
        <label>PIGA</label>
    </interactant>
    <organismsDiffer>false</organismsDiffer>
    <experiments>5</experiments>
</comment>
<comment type="interaction">
    <interactant intactId="EBI-2339260">
        <id>Q9BRB3</id>
    </interactant>
    <interactant intactId="EBI-721918">
        <id>Q92535</id>
        <label>PIGC</label>
    </interactant>
    <organismsDiffer>false</organismsDiffer>
    <experiments>4</experiments>
</comment>
<comment type="interaction">
    <interactant intactId="EBI-2339260">
        <id>Q9BRB3</id>
    </interactant>
    <interactant intactId="EBI-2803676">
        <id>Q14442</id>
        <label>PIGH</label>
    </interactant>
    <organismsDiffer>false</organismsDiffer>
    <experiments>2</experiments>
</comment>
<comment type="subcellular location">
    <subcellularLocation>
        <location evidence="15">Membrane</location>
        <topology evidence="15">Multi-pass membrane protein</topology>
    </subcellularLocation>
</comment>
<comment type="alternative products">
    <event type="alternative splicing"/>
    <isoform>
        <id>Q9BRB3-1</id>
        <name>1</name>
        <sequence type="displayed"/>
    </isoform>
    <isoform>
        <id>Q9BRB3-2</id>
        <name>2</name>
        <sequence type="described" ref="VSP_007281 VSP_007282"/>
    </isoform>
    <isoform>
        <id>Q9BRB3-3</id>
        <name>3</name>
        <sequence type="described" ref="VSP_007279 VSP_007280"/>
    </isoform>
</comment>
<comment type="disease" evidence="7 8 9 10">
    <disease id="DI-05640">
        <name>Multiple congenital anomalies-hypotonia-seizures syndrome 4</name>
        <acronym>MCAHS4</acronym>
        <description>An autosomal recessive syndrome characterized by onset of refractory seizures in the first months of life. Additional clinical features include severe global developmental delay, dysmorphic facial features, and skeletal, renal and ophthalmic anomalies. At the cellular level, the disorder is caused by a defect in the synthesis of glycosylphosphatidylinositol (GPI).</description>
        <dbReference type="MIM" id="618548"/>
    </disease>
    <text>The disease is caused by variants affecting the gene represented in this entry.</text>
</comment>
<comment type="similarity">
    <text evidence="15">Belongs to the PIGQ family.</text>
</comment>
<proteinExistence type="evidence at protein level"/>
<organism>
    <name type="scientific">Homo sapiens</name>
    <name type="common">Human</name>
    <dbReference type="NCBI Taxonomy" id="9606"/>
    <lineage>
        <taxon>Eukaryota</taxon>
        <taxon>Metazoa</taxon>
        <taxon>Chordata</taxon>
        <taxon>Craniata</taxon>
        <taxon>Vertebrata</taxon>
        <taxon>Euteleostomi</taxon>
        <taxon>Mammalia</taxon>
        <taxon>Eutheria</taxon>
        <taxon>Euarchontoglires</taxon>
        <taxon>Primates</taxon>
        <taxon>Haplorrhini</taxon>
        <taxon>Catarrhini</taxon>
        <taxon>Hominidae</taxon>
        <taxon>Homo</taxon>
    </lineage>
</organism>
<accession>Q9BRB3</accession>
<accession>A2IDE1</accession>
<accession>D3DU52</accession>
<accession>O14927</accession>
<accession>Q96G00</accession>
<accession>Q96S22</accession>
<accession>Q9UJH4</accession>
<protein>
    <recommendedName>
        <fullName evidence="15">Phosphatidylinositol N-acetylglucosaminyltransferase subunit Q</fullName>
    </recommendedName>
    <alternativeName>
        <fullName>N-acetylglucosamyl transferase component GPI1</fullName>
    </alternativeName>
    <alternativeName>
        <fullName>Phosphatidylinositol-glycan biosynthesis class Q protein</fullName>
        <shortName>PIG-Q</shortName>
    </alternativeName>
</protein>
<name>PIGQ_HUMAN</name>
<sequence>MVLKAFFPTCCVSTDSGLLVGRWVPEQSSAVVLAVLHFPFIPIQVKQLLAQVRQASQVGVAVLGTWCHCRQEPEESLGRFLESLGAVFPHEPWLRLCRERGGTFWSCEATHRQAPTAPGAPGEDQVMLIFYDQRQVLLSQLHLPTVLPDRQAGATTASTGGLAAVFDTVARSEVLFRSDRFDEGPVRLSHWQSEGVEASILAELARRASGPICLLLASLLSLVSAVSACRVFKLWPLSFLGSKLSTCEQLRHRLEHLTLIFSTRKAENPAQLMRKANTVASVLLDVALGLMLLSWLHGRSRIGHLADALVPVADHVAEELQHLLQWLMGAPAGLKMNRALDQVLGRFFLYHIHLWISYIHLMSPFVEHILWHVGLSACLGLTVALSLLSDIIALLTFHIYCFYVYGARLYCLKIHGLSSLWRLFRGKKWNVLRQRVDSCSYDLDQLFIGTLLFTILLFLLPTTALYYLVFTLLRLLVVAVQGLIHLLVDLINSLPLYSLGLRLCRPYRLADKPTALQPRGAHLPPPQLWLPPQALLGRPVPQAVPWGAHLPLEAERGQAGLRELLARLAPPHGHSQPSALPGWHQLSWRMSCALWTLLCAPEHGRPCYHTLGLEVIGSEQMWGWPARLAALHHWHCLPWDPLPTCCGHHGGEHSNPRCPEHCPMPTLCTQVQRVRPPQQPQVEGWSPWGLPSGSALAVGVEGPCQDEPPSPRHPLAPSAEQHPASGGLKQSLTPVPSGPGPSLPEPHGVYLRMFPGEVAL</sequence>
<keyword id="KW-0025">Alternative splicing</keyword>
<keyword id="KW-0903">Direct protein sequencing</keyword>
<keyword id="KW-0225">Disease variant</keyword>
<keyword id="KW-0887">Epilepsy</keyword>
<keyword id="KW-0337">GPI-anchor biosynthesis</keyword>
<keyword id="KW-0472">Membrane</keyword>
<keyword id="KW-1267">Proteomics identification</keyword>
<keyword id="KW-1185">Reference proteome</keyword>
<keyword id="KW-0812">Transmembrane</keyword>
<keyword id="KW-1133">Transmembrane helix</keyword>
<gene>
    <name evidence="16" type="primary">PIGQ</name>
    <name type="synonym">GPI1</name>
</gene>
<feature type="initiator methionine" description="Removed" evidence="3">
    <location>
        <position position="1"/>
    </location>
</feature>
<feature type="chain" id="PRO_0000215664" description="Phosphatidylinositol N-acetylglucosaminyltransferase subunit Q">
    <location>
        <begin position="2"/>
        <end position="760"/>
    </location>
</feature>
<feature type="transmembrane region" description="Helical" evidence="1">
    <location>
        <begin position="278"/>
        <end position="298"/>
    </location>
</feature>
<feature type="transmembrane region" description="Helical" evidence="1">
    <location>
        <begin position="349"/>
        <end position="371"/>
    </location>
</feature>
<feature type="transmembrane region" description="Helical" evidence="1">
    <location>
        <begin position="378"/>
        <end position="400"/>
    </location>
</feature>
<feature type="transmembrane region" description="Helical" evidence="1">
    <location>
        <begin position="446"/>
        <end position="468"/>
    </location>
</feature>
<feature type="transmembrane region" description="Helical" evidence="1">
    <location>
        <begin position="475"/>
        <end position="497"/>
    </location>
</feature>
<feature type="region of interest" description="Disordered" evidence="2">
    <location>
        <begin position="696"/>
        <end position="748"/>
    </location>
</feature>
<feature type="splice variant" id="VSP_007279" description="In isoform 3." evidence="12">
    <original>KANTVASVLLDVALGLMLLSWLHGR</original>
    <variation>CGPALVSAGLGACPLAPSPSPSAPR</variation>
    <location>
        <begin position="275"/>
        <end position="299"/>
    </location>
</feature>
<feature type="splice variant" id="VSP_007280" description="In isoform 3." evidence="12">
    <location>
        <begin position="300"/>
        <end position="760"/>
    </location>
</feature>
<feature type="splice variant" id="VSP_007281" description="In isoform 2." evidence="13 14">
    <original>DKPTALQPRGAHLPPPQLWLPPQALLGRPVPQAVPWGAHLPLEAERGQAGLRELLARLAPPHGHSQPSALP</original>
    <variation>AGVKFRVLRHEAGRPLRLLMQINPLPYSRVVHTYRLPSCGCHPKHSWGALCRKLFLGELIYPWRQRGDKQD</variation>
    <location>
        <begin position="511"/>
        <end position="581"/>
    </location>
</feature>
<feature type="splice variant" id="VSP_007282" description="In isoform 2." evidence="13 14">
    <location>
        <begin position="582"/>
        <end position="760"/>
    </location>
</feature>
<feature type="sequence variant" id="VAR_015596" description="In dbSNP:rs2071979." evidence="4 5">
    <original>T</original>
    <variation>A</variation>
    <location>
        <position position="14"/>
    </location>
</feature>
<feature type="sequence variant" id="VAR_083110" description="In MCAHS4." evidence="8">
    <location>
        <begin position="207"/>
        <end position="760"/>
    </location>
</feature>
<feature type="sequence variant" id="VAR_083111" description="In MCAHS4." evidence="9 10">
    <location>
        <position position="400"/>
    </location>
</feature>
<feature type="sequence variant" id="VAR_053579" description="In dbSNP:rs1045277.">
    <original>C</original>
    <variation>R</variation>
    <location>
        <position position="592"/>
    </location>
</feature>
<feature type="sequence variant" id="VAR_053580" description="In dbSNP:rs710924.">
    <original>C</original>
    <variation>R</variation>
    <location>
        <position position="668"/>
    </location>
</feature>
<feature type="sequence variant" id="VAR_053581" description="In dbSNP:rs710925.">
    <original>C</original>
    <variation>Y</variation>
    <location>
        <position position="668"/>
    </location>
</feature>